<keyword id="KW-0067">ATP-binding</keyword>
<keyword id="KW-0997">Cell inner membrane</keyword>
<keyword id="KW-1003">Cell membrane</keyword>
<keyword id="KW-0963">Cytoplasm</keyword>
<keyword id="KW-0472">Membrane</keyword>
<keyword id="KW-0479">Metal-binding</keyword>
<keyword id="KW-0547">Nucleotide-binding</keyword>
<keyword id="KW-0653">Protein transport</keyword>
<keyword id="KW-1185">Reference proteome</keyword>
<keyword id="KW-1278">Translocase</keyword>
<keyword id="KW-0811">Translocation</keyword>
<keyword id="KW-0813">Transport</keyword>
<keyword id="KW-0862">Zinc</keyword>
<proteinExistence type="inferred from homology"/>
<gene>
    <name evidence="1" type="primary">secA</name>
    <name type="ordered locus">AZC_3307</name>
</gene>
<name>SECA_AZOC5</name>
<accession>A8IHQ3</accession>
<reference key="1">
    <citation type="submission" date="2007-04" db="EMBL/GenBank/DDBJ databases">
        <title>Complete genome sequence of the nitrogen-fixing bacterium Azorhizobium caulinodans ORS571.</title>
        <authorList>
            <person name="Lee K.B."/>
            <person name="Backer P.D."/>
            <person name="Aono T."/>
            <person name="Liu C.T."/>
            <person name="Suzuki S."/>
            <person name="Suzuki T."/>
            <person name="Kaneko T."/>
            <person name="Yamada M."/>
            <person name="Tabata S."/>
            <person name="Kupfer D.M."/>
            <person name="Najar F.Z."/>
            <person name="Wiley G.B."/>
            <person name="Roe B."/>
            <person name="Binnewies T."/>
            <person name="Ussery D."/>
            <person name="Vereecke D."/>
            <person name="Gevers D."/>
            <person name="Holsters M."/>
            <person name="Oyaizu H."/>
        </authorList>
    </citation>
    <scope>NUCLEOTIDE SEQUENCE [LARGE SCALE GENOMIC DNA]</scope>
    <source>
        <strain>ATCC 43989 / DSM 5975 / JCM 20966 / LMG 6465 / NBRC 14845 / NCIMB 13405 / ORS 571</strain>
    </source>
</reference>
<comment type="function">
    <text evidence="1">Part of the Sec protein translocase complex. Interacts with the SecYEG preprotein conducting channel. Has a central role in coupling the hydrolysis of ATP to the transfer of proteins into and across the cell membrane, serving both as a receptor for the preprotein-SecB complex and as an ATP-driven molecular motor driving the stepwise translocation of polypeptide chains across the membrane.</text>
</comment>
<comment type="catalytic activity">
    <reaction evidence="1">
        <text>ATP + H2O + cellular proteinSide 1 = ADP + phosphate + cellular proteinSide 2.</text>
        <dbReference type="EC" id="7.4.2.8"/>
    </reaction>
</comment>
<comment type="cofactor">
    <cofactor evidence="1">
        <name>Zn(2+)</name>
        <dbReference type="ChEBI" id="CHEBI:29105"/>
    </cofactor>
    <text evidence="1">May bind 1 zinc ion per subunit.</text>
</comment>
<comment type="subunit">
    <text evidence="1">Monomer and homodimer. Part of the essential Sec protein translocation apparatus which comprises SecA, SecYEG and auxiliary proteins SecDF-YajC and YidC.</text>
</comment>
<comment type="subcellular location">
    <subcellularLocation>
        <location evidence="1">Cell inner membrane</location>
        <topology evidence="1">Peripheral membrane protein</topology>
        <orientation evidence="1">Cytoplasmic side</orientation>
    </subcellularLocation>
    <subcellularLocation>
        <location evidence="1">Cytoplasm</location>
    </subcellularLocation>
    <text evidence="1">Distribution is 50-50.</text>
</comment>
<comment type="similarity">
    <text evidence="1">Belongs to the SecA family.</text>
</comment>
<sequence>MLGGLARKIFGSANDRRVRGYRPSVEAINKLEPELETLTDEQLRERTVMFRQQLAEGKTLDDLLVPAFATVREAAKRVMGMRHFDVQLIGGMVLHDAGIAEMRTGEGKTLVATLPVYLNALAGKGVHVVTVNDYLARRDAEWMAKVYGFLGLTTGIIVHGLDDDQRRAAYACDVTYATNNELGFDYLRDNMKYERAQMVQRPHYFAIVDEVDSILIDEARTPLIISGPLDDRSDFYNTIDKFIPRLSKGDYEVDEKQRSVAMTEAGMEKMEQMLTEAELLKSGSLYDIENVSIVHHVNQALRAHSLFQRDKDYIVRNDEVVIIDEFTGRMMPGRRYSEGLHQALEAKERVTVQPENQTLASITFQNYFRLYERLGGMTGTAATEAAEFADIYKLDVVEIPTNRKVQRIDDDDEVYRTNREKFDAIVKLIQECAARKQPVLVGTTSIEKSELLAERLKQAGMRQKDFSDRAAFTGSSDGKSFAVLNARYHEQEAFIVAQAGVPGAVTIATNMAGRGTDIQLGGNAEMRISEELADLPAGPEREAAEAKIREEIAALKQEALAAGGLFVLGTERHESRRIDNQLRGRSGRQGDPGHSKFFLSLEDDLMRIFGSDRLEGMLKRLGLQEGEAIIHPWINRALEKAQQKVEARNYDMRKNVLKYDDVLNDQRKVVFEQRLELMNDEDVAETVVDMRHDVITDLVAKYIPVNSYPEQWDVKGLDFAVRDVLTLALPIEDWAKEEGIAGPEVTERIIQKADEWMASKSAQYGPELMRYVEKSILLQTLDHLWREHIAMLDHLRQVIGLRGYGQRDPLQEYKSEAFQLFSAMLGRLREIVTAQLMRVEIVSTPQPTELPPMEAHHIDASTGEDELASAGAALSARPELALATEVPAADRDPNDPSTWGKVGRNEPCPCGSGKKFKHCHGRFA</sequence>
<feature type="chain" id="PRO_0000320730" description="Protein translocase subunit SecA">
    <location>
        <begin position="1"/>
        <end position="924"/>
    </location>
</feature>
<feature type="region of interest" description="Disordered" evidence="2">
    <location>
        <begin position="886"/>
        <end position="906"/>
    </location>
</feature>
<feature type="binding site" evidence="1">
    <location>
        <position position="87"/>
    </location>
    <ligand>
        <name>ATP</name>
        <dbReference type="ChEBI" id="CHEBI:30616"/>
    </ligand>
</feature>
<feature type="binding site" evidence="1">
    <location>
        <begin position="105"/>
        <end position="109"/>
    </location>
    <ligand>
        <name>ATP</name>
        <dbReference type="ChEBI" id="CHEBI:30616"/>
    </ligand>
</feature>
<feature type="binding site" evidence="1">
    <location>
        <position position="517"/>
    </location>
    <ligand>
        <name>ATP</name>
        <dbReference type="ChEBI" id="CHEBI:30616"/>
    </ligand>
</feature>
<feature type="binding site" evidence="1">
    <location>
        <position position="908"/>
    </location>
    <ligand>
        <name>Zn(2+)</name>
        <dbReference type="ChEBI" id="CHEBI:29105"/>
    </ligand>
</feature>
<feature type="binding site" evidence="1">
    <location>
        <position position="910"/>
    </location>
    <ligand>
        <name>Zn(2+)</name>
        <dbReference type="ChEBI" id="CHEBI:29105"/>
    </ligand>
</feature>
<feature type="binding site" evidence="1">
    <location>
        <position position="919"/>
    </location>
    <ligand>
        <name>Zn(2+)</name>
        <dbReference type="ChEBI" id="CHEBI:29105"/>
    </ligand>
</feature>
<feature type="binding site" evidence="1">
    <location>
        <position position="920"/>
    </location>
    <ligand>
        <name>Zn(2+)</name>
        <dbReference type="ChEBI" id="CHEBI:29105"/>
    </ligand>
</feature>
<dbReference type="EC" id="7.4.2.8" evidence="1"/>
<dbReference type="EMBL" id="AP009384">
    <property type="protein sequence ID" value="BAF89305.1"/>
    <property type="molecule type" value="Genomic_DNA"/>
</dbReference>
<dbReference type="RefSeq" id="WP_012171830.1">
    <property type="nucleotide sequence ID" value="NC_009937.1"/>
</dbReference>
<dbReference type="SMR" id="A8IHQ3"/>
<dbReference type="STRING" id="438753.AZC_3307"/>
<dbReference type="KEGG" id="azc:AZC_3307"/>
<dbReference type="eggNOG" id="COG0653">
    <property type="taxonomic scope" value="Bacteria"/>
</dbReference>
<dbReference type="HOGENOM" id="CLU_005314_3_0_5"/>
<dbReference type="Proteomes" id="UP000000270">
    <property type="component" value="Chromosome"/>
</dbReference>
<dbReference type="GO" id="GO:0031522">
    <property type="term" value="C:cell envelope Sec protein transport complex"/>
    <property type="evidence" value="ECO:0007669"/>
    <property type="project" value="TreeGrafter"/>
</dbReference>
<dbReference type="GO" id="GO:0005829">
    <property type="term" value="C:cytosol"/>
    <property type="evidence" value="ECO:0007669"/>
    <property type="project" value="TreeGrafter"/>
</dbReference>
<dbReference type="GO" id="GO:0005886">
    <property type="term" value="C:plasma membrane"/>
    <property type="evidence" value="ECO:0007669"/>
    <property type="project" value="UniProtKB-SubCell"/>
</dbReference>
<dbReference type="GO" id="GO:0005524">
    <property type="term" value="F:ATP binding"/>
    <property type="evidence" value="ECO:0007669"/>
    <property type="project" value="UniProtKB-UniRule"/>
</dbReference>
<dbReference type="GO" id="GO:0046872">
    <property type="term" value="F:metal ion binding"/>
    <property type="evidence" value="ECO:0007669"/>
    <property type="project" value="UniProtKB-KW"/>
</dbReference>
<dbReference type="GO" id="GO:0008564">
    <property type="term" value="F:protein-exporting ATPase activity"/>
    <property type="evidence" value="ECO:0007669"/>
    <property type="project" value="UniProtKB-EC"/>
</dbReference>
<dbReference type="GO" id="GO:0065002">
    <property type="term" value="P:intracellular protein transmembrane transport"/>
    <property type="evidence" value="ECO:0007669"/>
    <property type="project" value="UniProtKB-UniRule"/>
</dbReference>
<dbReference type="GO" id="GO:0017038">
    <property type="term" value="P:protein import"/>
    <property type="evidence" value="ECO:0007669"/>
    <property type="project" value="InterPro"/>
</dbReference>
<dbReference type="GO" id="GO:0006605">
    <property type="term" value="P:protein targeting"/>
    <property type="evidence" value="ECO:0007669"/>
    <property type="project" value="UniProtKB-UniRule"/>
</dbReference>
<dbReference type="GO" id="GO:0043952">
    <property type="term" value="P:protein transport by the Sec complex"/>
    <property type="evidence" value="ECO:0007669"/>
    <property type="project" value="TreeGrafter"/>
</dbReference>
<dbReference type="CDD" id="cd17928">
    <property type="entry name" value="DEXDc_SecA"/>
    <property type="match status" value="1"/>
</dbReference>
<dbReference type="CDD" id="cd18803">
    <property type="entry name" value="SF2_C_secA"/>
    <property type="match status" value="1"/>
</dbReference>
<dbReference type="FunFam" id="3.90.1440.10:FF:000001">
    <property type="entry name" value="Preprotein translocase subunit SecA"/>
    <property type="match status" value="1"/>
</dbReference>
<dbReference type="FunFam" id="1.10.3060.10:FF:000003">
    <property type="entry name" value="Protein translocase subunit SecA"/>
    <property type="match status" value="1"/>
</dbReference>
<dbReference type="FunFam" id="3.40.50.300:FF:000334">
    <property type="entry name" value="Protein translocase subunit SecA"/>
    <property type="match status" value="1"/>
</dbReference>
<dbReference type="FunFam" id="3.40.50.300:FF:001790">
    <property type="entry name" value="Protein translocase subunit SecA"/>
    <property type="match status" value="1"/>
</dbReference>
<dbReference type="Gene3D" id="1.10.3060.10">
    <property type="entry name" value="Helical scaffold and wing domains of SecA"/>
    <property type="match status" value="1"/>
</dbReference>
<dbReference type="Gene3D" id="3.40.50.300">
    <property type="entry name" value="P-loop containing nucleotide triphosphate hydrolases"/>
    <property type="match status" value="2"/>
</dbReference>
<dbReference type="Gene3D" id="3.90.1440.10">
    <property type="entry name" value="SecA, preprotein cross-linking domain"/>
    <property type="match status" value="1"/>
</dbReference>
<dbReference type="HAMAP" id="MF_01382">
    <property type="entry name" value="SecA"/>
    <property type="match status" value="1"/>
</dbReference>
<dbReference type="InterPro" id="IPR014001">
    <property type="entry name" value="Helicase_ATP-bd"/>
</dbReference>
<dbReference type="InterPro" id="IPR027417">
    <property type="entry name" value="P-loop_NTPase"/>
</dbReference>
<dbReference type="InterPro" id="IPR004027">
    <property type="entry name" value="SEC_C_motif"/>
</dbReference>
<dbReference type="InterPro" id="IPR000185">
    <property type="entry name" value="SecA"/>
</dbReference>
<dbReference type="InterPro" id="IPR020937">
    <property type="entry name" value="SecA_CS"/>
</dbReference>
<dbReference type="InterPro" id="IPR011115">
    <property type="entry name" value="SecA_DEAD"/>
</dbReference>
<dbReference type="InterPro" id="IPR014018">
    <property type="entry name" value="SecA_motor_DEAD"/>
</dbReference>
<dbReference type="InterPro" id="IPR011130">
    <property type="entry name" value="SecA_preprotein_X-link_dom"/>
</dbReference>
<dbReference type="InterPro" id="IPR044722">
    <property type="entry name" value="SecA_SF2_C"/>
</dbReference>
<dbReference type="InterPro" id="IPR011116">
    <property type="entry name" value="SecA_Wing/Scaffold"/>
</dbReference>
<dbReference type="InterPro" id="IPR036266">
    <property type="entry name" value="SecA_Wing/Scaffold_sf"/>
</dbReference>
<dbReference type="InterPro" id="IPR036670">
    <property type="entry name" value="SecA_X-link_sf"/>
</dbReference>
<dbReference type="NCBIfam" id="NF009538">
    <property type="entry name" value="PRK12904.1"/>
    <property type="match status" value="1"/>
</dbReference>
<dbReference type="NCBIfam" id="TIGR00963">
    <property type="entry name" value="secA"/>
    <property type="match status" value="1"/>
</dbReference>
<dbReference type="PANTHER" id="PTHR30612:SF0">
    <property type="entry name" value="CHLOROPLAST PROTEIN-TRANSPORTING ATPASE"/>
    <property type="match status" value="1"/>
</dbReference>
<dbReference type="PANTHER" id="PTHR30612">
    <property type="entry name" value="SECA INNER MEMBRANE COMPONENT OF SEC PROTEIN SECRETION SYSTEM"/>
    <property type="match status" value="1"/>
</dbReference>
<dbReference type="Pfam" id="PF21090">
    <property type="entry name" value="P-loop_SecA"/>
    <property type="match status" value="1"/>
</dbReference>
<dbReference type="Pfam" id="PF02810">
    <property type="entry name" value="SEC-C"/>
    <property type="match status" value="1"/>
</dbReference>
<dbReference type="Pfam" id="PF07517">
    <property type="entry name" value="SecA_DEAD"/>
    <property type="match status" value="1"/>
</dbReference>
<dbReference type="Pfam" id="PF01043">
    <property type="entry name" value="SecA_PP_bind"/>
    <property type="match status" value="1"/>
</dbReference>
<dbReference type="Pfam" id="PF07516">
    <property type="entry name" value="SecA_SW"/>
    <property type="match status" value="1"/>
</dbReference>
<dbReference type="PRINTS" id="PR00906">
    <property type="entry name" value="SECA"/>
</dbReference>
<dbReference type="SMART" id="SM00957">
    <property type="entry name" value="SecA_DEAD"/>
    <property type="match status" value="1"/>
</dbReference>
<dbReference type="SMART" id="SM00958">
    <property type="entry name" value="SecA_PP_bind"/>
    <property type="match status" value="1"/>
</dbReference>
<dbReference type="SUPFAM" id="SSF81886">
    <property type="entry name" value="Helical scaffold and wing domains of SecA"/>
    <property type="match status" value="1"/>
</dbReference>
<dbReference type="SUPFAM" id="SSF52540">
    <property type="entry name" value="P-loop containing nucleoside triphosphate hydrolases"/>
    <property type="match status" value="2"/>
</dbReference>
<dbReference type="SUPFAM" id="SSF81767">
    <property type="entry name" value="Pre-protein crosslinking domain of SecA"/>
    <property type="match status" value="1"/>
</dbReference>
<dbReference type="PROSITE" id="PS01312">
    <property type="entry name" value="SECA"/>
    <property type="match status" value="1"/>
</dbReference>
<dbReference type="PROSITE" id="PS51196">
    <property type="entry name" value="SECA_MOTOR_DEAD"/>
    <property type="match status" value="1"/>
</dbReference>
<organism>
    <name type="scientific">Azorhizobium caulinodans (strain ATCC 43989 / DSM 5975 / JCM 20966 / LMG 6465 / NBRC 14845 / NCIMB 13405 / ORS 571)</name>
    <dbReference type="NCBI Taxonomy" id="438753"/>
    <lineage>
        <taxon>Bacteria</taxon>
        <taxon>Pseudomonadati</taxon>
        <taxon>Pseudomonadota</taxon>
        <taxon>Alphaproteobacteria</taxon>
        <taxon>Hyphomicrobiales</taxon>
        <taxon>Xanthobacteraceae</taxon>
        <taxon>Azorhizobium</taxon>
    </lineage>
</organism>
<protein>
    <recommendedName>
        <fullName evidence="1">Protein translocase subunit SecA</fullName>
        <ecNumber evidence="1">7.4.2.8</ecNumber>
    </recommendedName>
</protein>
<evidence type="ECO:0000255" key="1">
    <source>
        <dbReference type="HAMAP-Rule" id="MF_01382"/>
    </source>
</evidence>
<evidence type="ECO:0000256" key="2">
    <source>
        <dbReference type="SAM" id="MobiDB-lite"/>
    </source>
</evidence>